<accession>A8AN85</accession>
<proteinExistence type="inferred from homology"/>
<protein>
    <recommendedName>
        <fullName evidence="1">LexA repressor</fullName>
        <ecNumber evidence="1">3.4.21.88</ecNumber>
    </recommendedName>
</protein>
<sequence length="202" mass="22344">MKALTARQQEVFDLIRDHISQTGMPPTRAEIAQRLGFRSPNAAEEHLKALARKGVIEIVSGASRGIRLLLDEEEGLPLVGRVAAGEPLLAQQHIEGHYQVDPSLFKPNADFLLRVSGMSMKDIGIMDGDLLAVHKTQDVRNGQVVVARIDDEVTVKRLKKQGNKVELLPENSEFKPIVVDLREQSFTIEGLAVGVIRNGEWL</sequence>
<name>LEXA_CITK8</name>
<keyword id="KW-0068">Autocatalytic cleavage</keyword>
<keyword id="KW-0227">DNA damage</keyword>
<keyword id="KW-0234">DNA repair</keyword>
<keyword id="KW-0235">DNA replication</keyword>
<keyword id="KW-0238">DNA-binding</keyword>
<keyword id="KW-0378">Hydrolase</keyword>
<keyword id="KW-1185">Reference proteome</keyword>
<keyword id="KW-0678">Repressor</keyword>
<keyword id="KW-0742">SOS response</keyword>
<keyword id="KW-0804">Transcription</keyword>
<keyword id="KW-0805">Transcription regulation</keyword>
<organism>
    <name type="scientific">Citrobacter koseri (strain ATCC BAA-895 / CDC 4225-83 / SGSC4696)</name>
    <dbReference type="NCBI Taxonomy" id="290338"/>
    <lineage>
        <taxon>Bacteria</taxon>
        <taxon>Pseudomonadati</taxon>
        <taxon>Pseudomonadota</taxon>
        <taxon>Gammaproteobacteria</taxon>
        <taxon>Enterobacterales</taxon>
        <taxon>Enterobacteriaceae</taxon>
        <taxon>Citrobacter</taxon>
    </lineage>
</organism>
<reference key="1">
    <citation type="submission" date="2007-08" db="EMBL/GenBank/DDBJ databases">
        <authorList>
            <consortium name="The Citrobacter koseri Genome Sequencing Project"/>
            <person name="McClelland M."/>
            <person name="Sanderson E.K."/>
            <person name="Porwollik S."/>
            <person name="Spieth J."/>
            <person name="Clifton W.S."/>
            <person name="Latreille P."/>
            <person name="Courtney L."/>
            <person name="Wang C."/>
            <person name="Pepin K."/>
            <person name="Bhonagiri V."/>
            <person name="Nash W."/>
            <person name="Johnson M."/>
            <person name="Thiruvilangam P."/>
            <person name="Wilson R."/>
        </authorList>
    </citation>
    <scope>NUCLEOTIDE SEQUENCE [LARGE SCALE GENOMIC DNA]</scope>
    <source>
        <strain>ATCC BAA-895 / CDC 4225-83 / SGSC4696</strain>
    </source>
</reference>
<evidence type="ECO:0000255" key="1">
    <source>
        <dbReference type="HAMAP-Rule" id="MF_00015"/>
    </source>
</evidence>
<dbReference type="EC" id="3.4.21.88" evidence="1"/>
<dbReference type="EMBL" id="CP000822">
    <property type="protein sequence ID" value="ABV14948.1"/>
    <property type="molecule type" value="Genomic_DNA"/>
</dbReference>
<dbReference type="RefSeq" id="WP_012134642.1">
    <property type="nucleotide sequence ID" value="NC_009792.1"/>
</dbReference>
<dbReference type="SMR" id="A8AN85"/>
<dbReference type="STRING" id="290338.CKO_03872"/>
<dbReference type="MEROPS" id="S24.001"/>
<dbReference type="GeneID" id="45137542"/>
<dbReference type="KEGG" id="cko:CKO_03872"/>
<dbReference type="HOGENOM" id="CLU_066192_45_3_6"/>
<dbReference type="OrthoDB" id="9802364at2"/>
<dbReference type="Proteomes" id="UP000008148">
    <property type="component" value="Chromosome"/>
</dbReference>
<dbReference type="GO" id="GO:0003677">
    <property type="term" value="F:DNA binding"/>
    <property type="evidence" value="ECO:0007669"/>
    <property type="project" value="UniProtKB-UniRule"/>
</dbReference>
<dbReference type="GO" id="GO:0004252">
    <property type="term" value="F:serine-type endopeptidase activity"/>
    <property type="evidence" value="ECO:0007669"/>
    <property type="project" value="UniProtKB-UniRule"/>
</dbReference>
<dbReference type="GO" id="GO:0006281">
    <property type="term" value="P:DNA repair"/>
    <property type="evidence" value="ECO:0007669"/>
    <property type="project" value="UniProtKB-UniRule"/>
</dbReference>
<dbReference type="GO" id="GO:0006260">
    <property type="term" value="P:DNA replication"/>
    <property type="evidence" value="ECO:0007669"/>
    <property type="project" value="UniProtKB-UniRule"/>
</dbReference>
<dbReference type="GO" id="GO:0045892">
    <property type="term" value="P:negative regulation of DNA-templated transcription"/>
    <property type="evidence" value="ECO:0007669"/>
    <property type="project" value="UniProtKB-UniRule"/>
</dbReference>
<dbReference type="GO" id="GO:0006508">
    <property type="term" value="P:proteolysis"/>
    <property type="evidence" value="ECO:0007669"/>
    <property type="project" value="InterPro"/>
</dbReference>
<dbReference type="GO" id="GO:0009432">
    <property type="term" value="P:SOS response"/>
    <property type="evidence" value="ECO:0007669"/>
    <property type="project" value="UniProtKB-UniRule"/>
</dbReference>
<dbReference type="CDD" id="cd06529">
    <property type="entry name" value="S24_LexA-like"/>
    <property type="match status" value="1"/>
</dbReference>
<dbReference type="FunFam" id="1.10.10.10:FF:000009">
    <property type="entry name" value="LexA repressor"/>
    <property type="match status" value="1"/>
</dbReference>
<dbReference type="FunFam" id="2.10.109.10:FF:000001">
    <property type="entry name" value="LexA repressor"/>
    <property type="match status" value="1"/>
</dbReference>
<dbReference type="Gene3D" id="2.10.109.10">
    <property type="entry name" value="Umud Fragment, subunit A"/>
    <property type="match status" value="1"/>
</dbReference>
<dbReference type="Gene3D" id="1.10.10.10">
    <property type="entry name" value="Winged helix-like DNA-binding domain superfamily/Winged helix DNA-binding domain"/>
    <property type="match status" value="1"/>
</dbReference>
<dbReference type="HAMAP" id="MF_00015">
    <property type="entry name" value="LexA"/>
    <property type="match status" value="1"/>
</dbReference>
<dbReference type="InterPro" id="IPR006200">
    <property type="entry name" value="LexA"/>
</dbReference>
<dbReference type="InterPro" id="IPR039418">
    <property type="entry name" value="LexA-like"/>
</dbReference>
<dbReference type="InterPro" id="IPR036286">
    <property type="entry name" value="LexA/Signal_pep-like_sf"/>
</dbReference>
<dbReference type="InterPro" id="IPR006199">
    <property type="entry name" value="LexA_DNA-bd_dom"/>
</dbReference>
<dbReference type="InterPro" id="IPR050077">
    <property type="entry name" value="LexA_repressor"/>
</dbReference>
<dbReference type="InterPro" id="IPR006197">
    <property type="entry name" value="Peptidase_S24_LexA"/>
</dbReference>
<dbReference type="InterPro" id="IPR015927">
    <property type="entry name" value="Peptidase_S24_S26A/B/C"/>
</dbReference>
<dbReference type="InterPro" id="IPR036388">
    <property type="entry name" value="WH-like_DNA-bd_sf"/>
</dbReference>
<dbReference type="InterPro" id="IPR036390">
    <property type="entry name" value="WH_DNA-bd_sf"/>
</dbReference>
<dbReference type="NCBIfam" id="TIGR00498">
    <property type="entry name" value="lexA"/>
    <property type="match status" value="1"/>
</dbReference>
<dbReference type="PANTHER" id="PTHR33516">
    <property type="entry name" value="LEXA REPRESSOR"/>
    <property type="match status" value="1"/>
</dbReference>
<dbReference type="PANTHER" id="PTHR33516:SF2">
    <property type="entry name" value="LEXA REPRESSOR-RELATED"/>
    <property type="match status" value="1"/>
</dbReference>
<dbReference type="Pfam" id="PF01726">
    <property type="entry name" value="LexA_DNA_bind"/>
    <property type="match status" value="1"/>
</dbReference>
<dbReference type="Pfam" id="PF00717">
    <property type="entry name" value="Peptidase_S24"/>
    <property type="match status" value="1"/>
</dbReference>
<dbReference type="PRINTS" id="PR00726">
    <property type="entry name" value="LEXASERPTASE"/>
</dbReference>
<dbReference type="SUPFAM" id="SSF51306">
    <property type="entry name" value="LexA/Signal peptidase"/>
    <property type="match status" value="1"/>
</dbReference>
<dbReference type="SUPFAM" id="SSF46785">
    <property type="entry name" value="Winged helix' DNA-binding domain"/>
    <property type="match status" value="1"/>
</dbReference>
<gene>
    <name evidence="1" type="primary">lexA</name>
    <name type="ordered locus">CKO_03872</name>
</gene>
<comment type="function">
    <text evidence="1">Represses a number of genes involved in the response to DNA damage (SOS response), including recA and lexA. Binds to the 16 bp palindromic sequence 5'-CTGTATATATATACAG-3'. In the presence of single-stranded DNA, RecA interacts with LexA causing an autocatalytic cleavage which disrupts the DNA-binding part of LexA, leading to derepression of the SOS regulon and eventually DNA repair.</text>
</comment>
<comment type="catalytic activity">
    <reaction evidence="1">
        <text>Hydrolysis of Ala-|-Gly bond in repressor LexA.</text>
        <dbReference type="EC" id="3.4.21.88"/>
    </reaction>
</comment>
<comment type="subunit">
    <text evidence="1">Homodimer.</text>
</comment>
<comment type="similarity">
    <text evidence="1">Belongs to the peptidase S24 family.</text>
</comment>
<feature type="chain" id="PRO_1000001277" description="LexA repressor">
    <location>
        <begin position="1"/>
        <end position="202"/>
    </location>
</feature>
<feature type="DNA-binding region" description="H-T-H motif" evidence="1">
    <location>
        <begin position="28"/>
        <end position="48"/>
    </location>
</feature>
<feature type="active site" description="For autocatalytic cleavage activity" evidence="1">
    <location>
        <position position="119"/>
    </location>
</feature>
<feature type="active site" description="For autocatalytic cleavage activity" evidence="1">
    <location>
        <position position="156"/>
    </location>
</feature>
<feature type="site" description="Cleavage; by autolysis" evidence="1">
    <location>
        <begin position="84"/>
        <end position="85"/>
    </location>
</feature>